<gene>
    <name evidence="1" type="primary">fusA</name>
    <name type="ordered locus">CYA_1301</name>
</gene>
<comment type="function">
    <text evidence="1">Catalyzes the GTP-dependent ribosomal translocation step during translation elongation. During this step, the ribosome changes from the pre-translocational (PRE) to the post-translocational (POST) state as the newly formed A-site-bound peptidyl-tRNA and P-site-bound deacylated tRNA move to the P and E sites, respectively. Catalyzes the coordinated movement of the two tRNA molecules, the mRNA and conformational changes in the ribosome.</text>
</comment>
<comment type="subcellular location">
    <subcellularLocation>
        <location evidence="1">Cytoplasm</location>
    </subcellularLocation>
</comment>
<comment type="similarity">
    <text evidence="1">Belongs to the TRAFAC class translation factor GTPase superfamily. Classic translation factor GTPase family. EF-G/EF-2 subfamily.</text>
</comment>
<reference key="1">
    <citation type="journal article" date="2007" name="ISME J.">
        <title>Population level functional diversity in a microbial community revealed by comparative genomic and metagenomic analyses.</title>
        <authorList>
            <person name="Bhaya D."/>
            <person name="Grossman A.R."/>
            <person name="Steunou A.-S."/>
            <person name="Khuri N."/>
            <person name="Cohan F.M."/>
            <person name="Hamamura N."/>
            <person name="Melendrez M.C."/>
            <person name="Bateson M.M."/>
            <person name="Ward D.M."/>
            <person name="Heidelberg J.F."/>
        </authorList>
    </citation>
    <scope>NUCLEOTIDE SEQUENCE [LARGE SCALE GENOMIC DNA]</scope>
    <source>
        <strain>JA-3-3Ab</strain>
    </source>
</reference>
<proteinExistence type="inferred from homology"/>
<organism>
    <name type="scientific">Synechococcus sp. (strain JA-3-3Ab)</name>
    <name type="common">Cyanobacteria bacterium Yellowstone A-Prime</name>
    <dbReference type="NCBI Taxonomy" id="321327"/>
    <lineage>
        <taxon>Bacteria</taxon>
        <taxon>Bacillati</taxon>
        <taxon>Cyanobacteriota</taxon>
        <taxon>Cyanophyceae</taxon>
        <taxon>Synechococcales</taxon>
        <taxon>Synechococcaceae</taxon>
        <taxon>Synechococcus</taxon>
    </lineage>
</organism>
<keyword id="KW-0963">Cytoplasm</keyword>
<keyword id="KW-0251">Elongation factor</keyword>
<keyword id="KW-0342">GTP-binding</keyword>
<keyword id="KW-0547">Nucleotide-binding</keyword>
<keyword id="KW-0648">Protein biosynthesis</keyword>
<accession>Q2JUX5</accession>
<protein>
    <recommendedName>
        <fullName evidence="1">Elongation factor G</fullName>
        <shortName evidence="1">EF-G</shortName>
    </recommendedName>
</protein>
<dbReference type="EMBL" id="CP000239">
    <property type="protein sequence ID" value="ABC99482.1"/>
    <property type="molecule type" value="Genomic_DNA"/>
</dbReference>
<dbReference type="RefSeq" id="WP_011430159.1">
    <property type="nucleotide sequence ID" value="NC_007775.1"/>
</dbReference>
<dbReference type="SMR" id="Q2JUX5"/>
<dbReference type="STRING" id="321327.CYA_1301"/>
<dbReference type="KEGG" id="cya:CYA_1301"/>
<dbReference type="eggNOG" id="COG0480">
    <property type="taxonomic scope" value="Bacteria"/>
</dbReference>
<dbReference type="HOGENOM" id="CLU_002794_4_1_3"/>
<dbReference type="OrthoDB" id="580826at2"/>
<dbReference type="Proteomes" id="UP000008818">
    <property type="component" value="Chromosome"/>
</dbReference>
<dbReference type="GO" id="GO:0005737">
    <property type="term" value="C:cytoplasm"/>
    <property type="evidence" value="ECO:0007669"/>
    <property type="project" value="UniProtKB-SubCell"/>
</dbReference>
<dbReference type="GO" id="GO:0005525">
    <property type="term" value="F:GTP binding"/>
    <property type="evidence" value="ECO:0007669"/>
    <property type="project" value="UniProtKB-UniRule"/>
</dbReference>
<dbReference type="GO" id="GO:0003924">
    <property type="term" value="F:GTPase activity"/>
    <property type="evidence" value="ECO:0007669"/>
    <property type="project" value="InterPro"/>
</dbReference>
<dbReference type="GO" id="GO:0003746">
    <property type="term" value="F:translation elongation factor activity"/>
    <property type="evidence" value="ECO:0007669"/>
    <property type="project" value="UniProtKB-UniRule"/>
</dbReference>
<dbReference type="GO" id="GO:0032790">
    <property type="term" value="P:ribosome disassembly"/>
    <property type="evidence" value="ECO:0007669"/>
    <property type="project" value="TreeGrafter"/>
</dbReference>
<dbReference type="CDD" id="cd01886">
    <property type="entry name" value="EF-G"/>
    <property type="match status" value="1"/>
</dbReference>
<dbReference type="CDD" id="cd16262">
    <property type="entry name" value="EFG_III"/>
    <property type="match status" value="1"/>
</dbReference>
<dbReference type="CDD" id="cd01434">
    <property type="entry name" value="EFG_mtEFG1_IV"/>
    <property type="match status" value="1"/>
</dbReference>
<dbReference type="CDD" id="cd03713">
    <property type="entry name" value="EFG_mtEFG_C"/>
    <property type="match status" value="1"/>
</dbReference>
<dbReference type="CDD" id="cd04088">
    <property type="entry name" value="EFG_mtEFG_II"/>
    <property type="match status" value="1"/>
</dbReference>
<dbReference type="FunFam" id="2.40.30.10:FF:000006">
    <property type="entry name" value="Elongation factor G"/>
    <property type="match status" value="1"/>
</dbReference>
<dbReference type="FunFam" id="3.30.230.10:FF:000003">
    <property type="entry name" value="Elongation factor G"/>
    <property type="match status" value="1"/>
</dbReference>
<dbReference type="FunFam" id="3.30.70.240:FF:000001">
    <property type="entry name" value="Elongation factor G"/>
    <property type="match status" value="1"/>
</dbReference>
<dbReference type="FunFam" id="3.30.70.870:FF:000001">
    <property type="entry name" value="Elongation factor G"/>
    <property type="match status" value="1"/>
</dbReference>
<dbReference type="FunFam" id="3.40.50.300:FF:000029">
    <property type="entry name" value="Elongation factor G"/>
    <property type="match status" value="1"/>
</dbReference>
<dbReference type="Gene3D" id="3.30.230.10">
    <property type="match status" value="1"/>
</dbReference>
<dbReference type="Gene3D" id="3.30.70.240">
    <property type="match status" value="1"/>
</dbReference>
<dbReference type="Gene3D" id="3.30.70.870">
    <property type="entry name" value="Elongation Factor G (Translational Gtpase), domain 3"/>
    <property type="match status" value="1"/>
</dbReference>
<dbReference type="Gene3D" id="3.40.50.300">
    <property type="entry name" value="P-loop containing nucleotide triphosphate hydrolases"/>
    <property type="match status" value="1"/>
</dbReference>
<dbReference type="Gene3D" id="2.40.30.10">
    <property type="entry name" value="Translation factors"/>
    <property type="match status" value="1"/>
</dbReference>
<dbReference type="HAMAP" id="MF_00054_B">
    <property type="entry name" value="EF_G_EF_2_B"/>
    <property type="match status" value="1"/>
</dbReference>
<dbReference type="InterPro" id="IPR041095">
    <property type="entry name" value="EFG_II"/>
</dbReference>
<dbReference type="InterPro" id="IPR009022">
    <property type="entry name" value="EFG_III"/>
</dbReference>
<dbReference type="InterPro" id="IPR035647">
    <property type="entry name" value="EFG_III/V"/>
</dbReference>
<dbReference type="InterPro" id="IPR047872">
    <property type="entry name" value="EFG_IV"/>
</dbReference>
<dbReference type="InterPro" id="IPR035649">
    <property type="entry name" value="EFG_V"/>
</dbReference>
<dbReference type="InterPro" id="IPR000640">
    <property type="entry name" value="EFG_V-like"/>
</dbReference>
<dbReference type="InterPro" id="IPR004161">
    <property type="entry name" value="EFTu-like_2"/>
</dbReference>
<dbReference type="InterPro" id="IPR031157">
    <property type="entry name" value="G_TR_CS"/>
</dbReference>
<dbReference type="InterPro" id="IPR027417">
    <property type="entry name" value="P-loop_NTPase"/>
</dbReference>
<dbReference type="InterPro" id="IPR020568">
    <property type="entry name" value="Ribosomal_Su5_D2-typ_SF"/>
</dbReference>
<dbReference type="InterPro" id="IPR014721">
    <property type="entry name" value="Ribsml_uS5_D2-typ_fold_subgr"/>
</dbReference>
<dbReference type="InterPro" id="IPR005225">
    <property type="entry name" value="Small_GTP-bd"/>
</dbReference>
<dbReference type="InterPro" id="IPR000795">
    <property type="entry name" value="T_Tr_GTP-bd_dom"/>
</dbReference>
<dbReference type="InterPro" id="IPR009000">
    <property type="entry name" value="Transl_B-barrel_sf"/>
</dbReference>
<dbReference type="InterPro" id="IPR004540">
    <property type="entry name" value="Transl_elong_EFG/EF2"/>
</dbReference>
<dbReference type="InterPro" id="IPR005517">
    <property type="entry name" value="Transl_elong_EFG/EF2_IV"/>
</dbReference>
<dbReference type="NCBIfam" id="TIGR00484">
    <property type="entry name" value="EF-G"/>
    <property type="match status" value="1"/>
</dbReference>
<dbReference type="NCBIfam" id="NF009381">
    <property type="entry name" value="PRK12740.1-5"/>
    <property type="match status" value="1"/>
</dbReference>
<dbReference type="NCBIfam" id="TIGR00231">
    <property type="entry name" value="small_GTP"/>
    <property type="match status" value="1"/>
</dbReference>
<dbReference type="PANTHER" id="PTHR43261:SF1">
    <property type="entry name" value="RIBOSOME-RELEASING FACTOR 2, MITOCHONDRIAL"/>
    <property type="match status" value="1"/>
</dbReference>
<dbReference type="PANTHER" id="PTHR43261">
    <property type="entry name" value="TRANSLATION ELONGATION FACTOR G-RELATED"/>
    <property type="match status" value="1"/>
</dbReference>
<dbReference type="Pfam" id="PF00679">
    <property type="entry name" value="EFG_C"/>
    <property type="match status" value="1"/>
</dbReference>
<dbReference type="Pfam" id="PF14492">
    <property type="entry name" value="EFG_III"/>
    <property type="match status" value="1"/>
</dbReference>
<dbReference type="Pfam" id="PF03764">
    <property type="entry name" value="EFG_IV"/>
    <property type="match status" value="1"/>
</dbReference>
<dbReference type="Pfam" id="PF00009">
    <property type="entry name" value="GTP_EFTU"/>
    <property type="match status" value="1"/>
</dbReference>
<dbReference type="Pfam" id="PF03144">
    <property type="entry name" value="GTP_EFTU_D2"/>
    <property type="match status" value="1"/>
</dbReference>
<dbReference type="PRINTS" id="PR00315">
    <property type="entry name" value="ELONGATNFCT"/>
</dbReference>
<dbReference type="SMART" id="SM00838">
    <property type="entry name" value="EFG_C"/>
    <property type="match status" value="1"/>
</dbReference>
<dbReference type="SMART" id="SM00889">
    <property type="entry name" value="EFG_IV"/>
    <property type="match status" value="1"/>
</dbReference>
<dbReference type="SUPFAM" id="SSF54980">
    <property type="entry name" value="EF-G C-terminal domain-like"/>
    <property type="match status" value="2"/>
</dbReference>
<dbReference type="SUPFAM" id="SSF52540">
    <property type="entry name" value="P-loop containing nucleoside triphosphate hydrolases"/>
    <property type="match status" value="1"/>
</dbReference>
<dbReference type="SUPFAM" id="SSF54211">
    <property type="entry name" value="Ribosomal protein S5 domain 2-like"/>
    <property type="match status" value="1"/>
</dbReference>
<dbReference type="SUPFAM" id="SSF50447">
    <property type="entry name" value="Translation proteins"/>
    <property type="match status" value="1"/>
</dbReference>
<dbReference type="PROSITE" id="PS00301">
    <property type="entry name" value="G_TR_1"/>
    <property type="match status" value="1"/>
</dbReference>
<dbReference type="PROSITE" id="PS51722">
    <property type="entry name" value="G_TR_2"/>
    <property type="match status" value="1"/>
</dbReference>
<name>EFG_SYNJA</name>
<evidence type="ECO:0000255" key="1">
    <source>
        <dbReference type="HAMAP-Rule" id="MF_00054"/>
    </source>
</evidence>
<feature type="chain" id="PRO_0000263524" description="Elongation factor G">
    <location>
        <begin position="1"/>
        <end position="710"/>
    </location>
</feature>
<feature type="domain" description="tr-type G">
    <location>
        <begin position="8"/>
        <end position="297"/>
    </location>
</feature>
<feature type="binding site" evidence="1">
    <location>
        <begin position="17"/>
        <end position="24"/>
    </location>
    <ligand>
        <name>GTP</name>
        <dbReference type="ChEBI" id="CHEBI:37565"/>
    </ligand>
</feature>
<feature type="binding site" evidence="1">
    <location>
        <begin position="96"/>
        <end position="100"/>
    </location>
    <ligand>
        <name>GTP</name>
        <dbReference type="ChEBI" id="CHEBI:37565"/>
    </ligand>
</feature>
<feature type="binding site" evidence="1">
    <location>
        <begin position="150"/>
        <end position="153"/>
    </location>
    <ligand>
        <name>GTP</name>
        <dbReference type="ChEBI" id="CHEBI:37565"/>
    </ligand>
</feature>
<sequence length="710" mass="77911">MARTVPLERVRNIGIAAHIDAGKTTTTERILFYSGLVHKLGEVHEGTTVTDWMAQERERGITITAAAITTRWTKRDPKNPSQPLAGAPEYTINIIDTPGHVDFTIEVERSMRVLDGVIAVFDSVGGVQPQSETVWRQANRYNVPRIAFVNKMDRMGANFLKVYNQIRERLKANAVPIQLPIGAEDEFRGIVDLVRLQANIYMDEIGKDIRPAPIPEEMKDLVAEYRAKLVEAVAETDEALMEKYFAEEDLSEADLMAGLRKGTISGQIVPMLCGSAFKNKGVQMLLDAVVDYLPSPIDIPAIKGVLPDGSEVSRKASDDEPFSALAFKLMSDKYGDLTFIRVYSGVLTKGTYVLNSTKNKKERISRLVVLKADERLDVDELRAGDLGAVLGLKDTTTGDTLCDENAPVILESLYIPEPVISVAVEPKTKADIDKLSKALQALAKEDPTFRVSVDPETNQTIISGMGELHLEILVDRMLREFNVEANVGNPQVAYRETIRKPVSRVEGKFIRQTGGRGQYGHVVIDLEPAEPGTGFEFVSKIVGGVIPKEYIPPAEQGIREACESGVLAGYPLIDIRVTLVDGSYHEVDSSEMAFKIAGSMALKEAARRANPVLLEPMMKVEVEVPEAFVGDVIGDINARRGQMEGMSTEGGISKVNAKVPLAEMFGYATDIRSKTQGRGIFTMEFSHYEEVPRSIAEAIIAKSKGSGVTN</sequence>